<sequence>MPSQDSDFPQKEHEKMTEFQEAVTFKDVAVVFTEEELGLLDSAQRKLYQDVMVENFRNLVSVGHVPFKADMVSQLETEEKLWTMERETQRNGHSSEIHSAVTSGSKIPNEMETLGKVMFKYLSCEELSCWQIWKHTTNDLTLQRKSSWFLHGDSLQVSEDENHIMNHKGDHFGCLENQEFLIPTAQASCGSRCLSESENPSRGKQMSVKNHLHVCEGFTKNSPLSDPGKTDAKQTPCKGERPHPCRVCGEGFSHGAVLPVHQVDPGEKCSHLQTHQRIHPGGTVNKCPKSGDGFHQNSFHPHHSNPTGEKSYRCDSCGKAFGSSTGLIIHYRTHTGEKPYRCEACGKCFSQSSNFQCHQRVHTEEKPYKCEECGKGFGWSVNLRVHQRVHRGEKPYKCEECGKGFTQAAHYHIHQRVHTGEKPYKCDVCGKGFSHNSPLICHRRVHTGEKPYRCEACGKGFTRNTDLHIHFRVHTGEKPYTCKECGKGFSQASNLQVHQNVHTGEKRFKCETCGKGFSQSSKLQTHQRVHTGEKPYRCDVCGKDFSYSSNLKLHQVIHTGEKPYTCEACGKGFSWRSNLHAHQRVHSGEKPYKCEACDKSFSQAIDFRVHQRVHTGEKPYKCGVCGKGFSQSSGLQSHQRVHTGEKPYKCDVCGKGFRYSSQFIYHQRGHTGEKPYKCEECGKGFGRSLNLRHHQRVHTGEKPHKCEECGKAFSLPSNLRVHLSVHTREKLFKCEDCGKGFSQSSRLQAHQRVHTGEKPYKCNICGKDFSHRSRLTYHQKVHTGKNL</sequence>
<organism>
    <name type="scientific">Bos taurus</name>
    <name type="common">Bovine</name>
    <dbReference type="NCBI Taxonomy" id="9913"/>
    <lineage>
        <taxon>Eukaryota</taxon>
        <taxon>Metazoa</taxon>
        <taxon>Chordata</taxon>
        <taxon>Craniata</taxon>
        <taxon>Vertebrata</taxon>
        <taxon>Euteleostomi</taxon>
        <taxon>Mammalia</taxon>
        <taxon>Eutheria</taxon>
        <taxon>Laurasiatheria</taxon>
        <taxon>Artiodactyla</taxon>
        <taxon>Ruminantia</taxon>
        <taxon>Pecora</taxon>
        <taxon>Bovidae</taxon>
        <taxon>Bovinae</taxon>
        <taxon>Bos</taxon>
    </lineage>
</organism>
<reference key="1">
    <citation type="submission" date="2006-10" db="EMBL/GenBank/DDBJ databases">
        <authorList>
            <consortium name="NIH - Mammalian Gene Collection (MGC) project"/>
        </authorList>
    </citation>
    <scope>NUCLEOTIDE SEQUENCE [LARGE SCALE MRNA]</scope>
    <source>
        <strain>Hereford</strain>
        <tissue>Fetal cerebellum</tissue>
    </source>
</reference>
<proteinExistence type="evidence at transcript level"/>
<protein>
    <recommendedName>
        <fullName>Zinc finger protein 227</fullName>
    </recommendedName>
</protein>
<accession>A0JNB1</accession>
<feature type="chain" id="PRO_0000284139" description="Zinc finger protein 227">
    <location>
        <begin position="1"/>
        <end position="787"/>
    </location>
</feature>
<feature type="domain" description="KRAB" evidence="2">
    <location>
        <begin position="23"/>
        <end position="94"/>
    </location>
</feature>
<feature type="zinc finger region" description="C2H2-type 1" evidence="1">
    <location>
        <begin position="243"/>
        <end position="275"/>
    </location>
</feature>
<feature type="zinc finger region" description="C2H2-type 2" evidence="1">
    <location>
        <begin position="312"/>
        <end position="334"/>
    </location>
</feature>
<feature type="zinc finger region" description="C2H2-type 3" evidence="1">
    <location>
        <begin position="340"/>
        <end position="362"/>
    </location>
</feature>
<feature type="zinc finger region" description="C2H2-type 4" evidence="1">
    <location>
        <begin position="368"/>
        <end position="390"/>
    </location>
</feature>
<feature type="zinc finger region" description="C2H2-type 5" evidence="1">
    <location>
        <begin position="396"/>
        <end position="418"/>
    </location>
</feature>
<feature type="zinc finger region" description="C2H2-type 6" evidence="1">
    <location>
        <begin position="424"/>
        <end position="446"/>
    </location>
</feature>
<feature type="zinc finger region" description="C2H2-type 7" evidence="1">
    <location>
        <begin position="452"/>
        <end position="474"/>
    </location>
</feature>
<feature type="zinc finger region" description="C2H2-type 8" evidence="1">
    <location>
        <begin position="480"/>
        <end position="502"/>
    </location>
</feature>
<feature type="zinc finger region" description="C2H2-type 9" evidence="1">
    <location>
        <begin position="508"/>
        <end position="530"/>
    </location>
</feature>
<feature type="zinc finger region" description="C2H2-type 10" evidence="1">
    <location>
        <begin position="536"/>
        <end position="558"/>
    </location>
</feature>
<feature type="zinc finger region" description="C2H2-type 11" evidence="1">
    <location>
        <begin position="564"/>
        <end position="586"/>
    </location>
</feature>
<feature type="zinc finger region" description="C2H2-type 12" evidence="1">
    <location>
        <begin position="592"/>
        <end position="614"/>
    </location>
</feature>
<feature type="zinc finger region" description="C2H2-type 13" evidence="1">
    <location>
        <begin position="620"/>
        <end position="642"/>
    </location>
</feature>
<feature type="zinc finger region" description="C2H2-type 14" evidence="1">
    <location>
        <begin position="648"/>
        <end position="670"/>
    </location>
</feature>
<feature type="zinc finger region" description="C2H2-type 15" evidence="1">
    <location>
        <begin position="676"/>
        <end position="698"/>
    </location>
</feature>
<feature type="zinc finger region" description="C2H2-type 16" evidence="1">
    <location>
        <begin position="704"/>
        <end position="726"/>
    </location>
</feature>
<feature type="zinc finger region" description="C2H2-type 17" evidence="1">
    <location>
        <begin position="732"/>
        <end position="754"/>
    </location>
</feature>
<feature type="zinc finger region" description="C2H2-type 18" evidence="1">
    <location>
        <begin position="760"/>
        <end position="782"/>
    </location>
</feature>
<dbReference type="EMBL" id="BC126592">
    <property type="protein sequence ID" value="AAI26593.1"/>
    <property type="molecule type" value="mRNA"/>
</dbReference>
<dbReference type="RefSeq" id="NP_001071428.1">
    <property type="nucleotide sequence ID" value="NM_001077960.2"/>
</dbReference>
<dbReference type="SMR" id="A0JNB1"/>
<dbReference type="FunCoup" id="A0JNB1">
    <property type="interactions" value="38"/>
</dbReference>
<dbReference type="STRING" id="9913.ENSBTAP00000017798"/>
<dbReference type="GeneID" id="524111"/>
<dbReference type="KEGG" id="bta:524111"/>
<dbReference type="CTD" id="7770"/>
<dbReference type="VEuPathDB" id="HostDB:ENSBTAG00000027431"/>
<dbReference type="HOGENOM" id="CLU_002678_44_5_1"/>
<dbReference type="InParanoid" id="A0JNB1"/>
<dbReference type="OMA" id="ICEDFMK"/>
<dbReference type="OrthoDB" id="9411774at2759"/>
<dbReference type="Reactome" id="R-BTA-212436">
    <property type="pathway name" value="Generic Transcription Pathway"/>
</dbReference>
<dbReference type="Proteomes" id="UP000009136">
    <property type="component" value="Chromosome 18"/>
</dbReference>
<dbReference type="Bgee" id="ENSBTAG00000027431">
    <property type="expression patterns" value="Expressed in mesenteric lymph node and 104 other cell types or tissues"/>
</dbReference>
<dbReference type="GO" id="GO:0005634">
    <property type="term" value="C:nucleus"/>
    <property type="evidence" value="ECO:0000318"/>
    <property type="project" value="GO_Central"/>
</dbReference>
<dbReference type="GO" id="GO:0003677">
    <property type="term" value="F:DNA binding"/>
    <property type="evidence" value="ECO:0007669"/>
    <property type="project" value="UniProtKB-KW"/>
</dbReference>
<dbReference type="GO" id="GO:0008270">
    <property type="term" value="F:zinc ion binding"/>
    <property type="evidence" value="ECO:0007669"/>
    <property type="project" value="UniProtKB-KW"/>
</dbReference>
<dbReference type="GO" id="GO:0006357">
    <property type="term" value="P:regulation of transcription by RNA polymerase II"/>
    <property type="evidence" value="ECO:0000318"/>
    <property type="project" value="GO_Central"/>
</dbReference>
<dbReference type="CDD" id="cd07765">
    <property type="entry name" value="KRAB_A-box"/>
    <property type="match status" value="1"/>
</dbReference>
<dbReference type="FunFam" id="3.30.160.60:FF:000029">
    <property type="entry name" value="GLI family zinc finger 4"/>
    <property type="match status" value="1"/>
</dbReference>
<dbReference type="FunFam" id="3.30.160.60:FF:000274">
    <property type="entry name" value="zinc finger protein 16"/>
    <property type="match status" value="3"/>
</dbReference>
<dbReference type="FunFam" id="3.30.160.60:FF:001158">
    <property type="entry name" value="zinc finger protein 22"/>
    <property type="match status" value="1"/>
</dbReference>
<dbReference type="FunFam" id="3.30.160.60:FF:001534">
    <property type="entry name" value="zinc finger protein 227 isoform X1"/>
    <property type="match status" value="3"/>
</dbReference>
<dbReference type="FunFam" id="3.30.160.60:FF:000671">
    <property type="entry name" value="Zinc finger protein 26"/>
    <property type="match status" value="1"/>
</dbReference>
<dbReference type="FunFam" id="3.30.160.60:FF:002343">
    <property type="entry name" value="Zinc finger protein 33A"/>
    <property type="match status" value="2"/>
</dbReference>
<dbReference type="FunFam" id="3.30.160.60:FF:000663">
    <property type="entry name" value="Zinc finger protein 45"/>
    <property type="match status" value="3"/>
</dbReference>
<dbReference type="FunFam" id="3.30.160.60:FF:002090">
    <property type="entry name" value="Zinc finger protein 473"/>
    <property type="match status" value="2"/>
</dbReference>
<dbReference type="FunFam" id="3.30.160.60:FF:002357">
    <property type="entry name" value="Zinc finger protein 782"/>
    <property type="match status" value="1"/>
</dbReference>
<dbReference type="Gene3D" id="6.10.140.140">
    <property type="match status" value="1"/>
</dbReference>
<dbReference type="Gene3D" id="3.30.160.60">
    <property type="entry name" value="Classic Zinc Finger"/>
    <property type="match status" value="18"/>
</dbReference>
<dbReference type="InterPro" id="IPR001909">
    <property type="entry name" value="KRAB"/>
</dbReference>
<dbReference type="InterPro" id="IPR036051">
    <property type="entry name" value="KRAB_dom_sf"/>
</dbReference>
<dbReference type="InterPro" id="IPR036236">
    <property type="entry name" value="Znf_C2H2_sf"/>
</dbReference>
<dbReference type="InterPro" id="IPR013087">
    <property type="entry name" value="Znf_C2H2_type"/>
</dbReference>
<dbReference type="PANTHER" id="PTHR24399:SF54">
    <property type="entry name" value="GASTRULA ZINC FINGER PROTEIN XLCGF26.1-LIKE-RELATED"/>
    <property type="match status" value="1"/>
</dbReference>
<dbReference type="PANTHER" id="PTHR24399">
    <property type="entry name" value="ZINC FINGER AND BTB DOMAIN-CONTAINING"/>
    <property type="match status" value="1"/>
</dbReference>
<dbReference type="Pfam" id="PF01352">
    <property type="entry name" value="KRAB"/>
    <property type="match status" value="1"/>
</dbReference>
<dbReference type="Pfam" id="PF00096">
    <property type="entry name" value="zf-C2H2"/>
    <property type="match status" value="17"/>
</dbReference>
<dbReference type="SMART" id="SM00349">
    <property type="entry name" value="KRAB"/>
    <property type="match status" value="1"/>
</dbReference>
<dbReference type="SMART" id="SM00355">
    <property type="entry name" value="ZnF_C2H2"/>
    <property type="match status" value="18"/>
</dbReference>
<dbReference type="SUPFAM" id="SSF57667">
    <property type="entry name" value="beta-beta-alpha zinc fingers"/>
    <property type="match status" value="10"/>
</dbReference>
<dbReference type="SUPFAM" id="SSF109640">
    <property type="entry name" value="KRAB domain (Kruppel-associated box)"/>
    <property type="match status" value="1"/>
</dbReference>
<dbReference type="PROSITE" id="PS50805">
    <property type="entry name" value="KRAB"/>
    <property type="match status" value="1"/>
</dbReference>
<dbReference type="PROSITE" id="PS00028">
    <property type="entry name" value="ZINC_FINGER_C2H2_1"/>
    <property type="match status" value="17"/>
</dbReference>
<dbReference type="PROSITE" id="PS50157">
    <property type="entry name" value="ZINC_FINGER_C2H2_2"/>
    <property type="match status" value="17"/>
</dbReference>
<gene>
    <name type="primary">ZNF227</name>
</gene>
<evidence type="ECO:0000255" key="1">
    <source>
        <dbReference type="PROSITE-ProRule" id="PRU00042"/>
    </source>
</evidence>
<evidence type="ECO:0000255" key="2">
    <source>
        <dbReference type="PROSITE-ProRule" id="PRU00119"/>
    </source>
</evidence>
<evidence type="ECO:0000305" key="3"/>
<name>ZN227_BOVIN</name>
<comment type="function">
    <text>May be involved in transcriptional regulation.</text>
</comment>
<comment type="subcellular location">
    <subcellularLocation>
        <location evidence="3">Nucleus</location>
    </subcellularLocation>
</comment>
<comment type="similarity">
    <text evidence="3">Belongs to the krueppel C2H2-type zinc-finger protein family.</text>
</comment>
<keyword id="KW-0238">DNA-binding</keyword>
<keyword id="KW-0479">Metal-binding</keyword>
<keyword id="KW-0539">Nucleus</keyword>
<keyword id="KW-1185">Reference proteome</keyword>
<keyword id="KW-0677">Repeat</keyword>
<keyword id="KW-0804">Transcription</keyword>
<keyword id="KW-0805">Transcription regulation</keyword>
<keyword id="KW-0862">Zinc</keyword>
<keyword id="KW-0863">Zinc-finger</keyword>